<organism>
    <name type="scientific">Homo sapiens</name>
    <name type="common">Human</name>
    <dbReference type="NCBI Taxonomy" id="9606"/>
    <lineage>
        <taxon>Eukaryota</taxon>
        <taxon>Metazoa</taxon>
        <taxon>Chordata</taxon>
        <taxon>Craniata</taxon>
        <taxon>Vertebrata</taxon>
        <taxon>Euteleostomi</taxon>
        <taxon>Mammalia</taxon>
        <taxon>Eutheria</taxon>
        <taxon>Euarchontoglires</taxon>
        <taxon>Primates</taxon>
        <taxon>Haplorrhini</taxon>
        <taxon>Catarrhini</taxon>
        <taxon>Hominidae</taxon>
        <taxon>Homo</taxon>
    </lineage>
</organism>
<sequence length="496" mass="54584">MTTFFTSVPPWIQDAKQEEEVGWKLVPRPRGREAESQVKCQCEISGTPFSNGEKLRPHSLPQPEQRPYSCPQLHCGKAFASKYKLYRHMATHSAQKPHQCMYCDKMFHRKDHLRNHLQTHDPNKEALHCSECGKNYNTKLGYRRHLAMHAASSGDLSCKVCLQTFESTQALLEHLKAHSRRVAGGAKEKKHPCDHCDRRFYTRKDVRRHLVVHTGRKDFLCQYCAQRFGRKDHLTRHVKKSHSQELLKIKTEPVDMLGLLSCSSTVSVKEELSPVLCMASRDVMGTKAFPGMLPMGMYGAHIPTMPSTGVPHSLVHNTLPMGMSYPLESSPISSPAQLPPKYQLGSTSYLPDKLPKVEVDSFLAELPGSLSLSSAEPQPASPQPAAAAALLDEALLAKSPANLSEALCAANVDFSHLLGFLPLNLPPCNPPGATGGLVMGYSQAEAQPLLTTLQAQPQDSPGAGGPLNFGPLHSLPPVFTSGLSSTTLPRFHQAFQ</sequence>
<dbReference type="EMBL" id="AF006005">
    <property type="protein sequence ID" value="AAC34252.1"/>
    <property type="molecule type" value="mRNA"/>
</dbReference>
<dbReference type="EMBL" id="D83784">
    <property type="protein sequence ID" value="BAA12113.1"/>
    <property type="status" value="ALT_INIT"/>
    <property type="molecule type" value="mRNA"/>
</dbReference>
<dbReference type="EMBL" id="AK292450">
    <property type="protein sequence ID" value="BAF85139.1"/>
    <property type="molecule type" value="mRNA"/>
</dbReference>
<dbReference type="EMBL" id="AL121897">
    <property type="status" value="NOT_ANNOTATED_CDS"/>
    <property type="molecule type" value="Genomic_DNA"/>
</dbReference>
<dbReference type="EMBL" id="CH471077">
    <property type="protein sequence ID" value="EAW76386.1"/>
    <property type="molecule type" value="Genomic_DNA"/>
</dbReference>
<dbReference type="EMBL" id="CH471077">
    <property type="protein sequence ID" value="EAW76387.1"/>
    <property type="molecule type" value="Genomic_DNA"/>
</dbReference>
<dbReference type="EMBL" id="BC023655">
    <property type="protein sequence ID" value="AAH23655.1"/>
    <property type="molecule type" value="mRNA"/>
</dbReference>
<dbReference type="CCDS" id="CCDS13197.1"/>
<dbReference type="RefSeq" id="NP_002648.1">
    <property type="nucleotide sequence ID" value="NM_002657.3"/>
</dbReference>
<dbReference type="RefSeq" id="XP_005260493.1">
    <property type="nucleotide sequence ID" value="XM_005260436.4"/>
</dbReference>
<dbReference type="RefSeq" id="XP_011527165.1">
    <property type="nucleotide sequence ID" value="XM_011528863.2"/>
</dbReference>
<dbReference type="RefSeq" id="XP_011527166.1">
    <property type="nucleotide sequence ID" value="XM_011528864.3"/>
</dbReference>
<dbReference type="RefSeq" id="XP_047296156.1">
    <property type="nucleotide sequence ID" value="XM_047440200.1"/>
</dbReference>
<dbReference type="RefSeq" id="XP_054179485.1">
    <property type="nucleotide sequence ID" value="XM_054323510.1"/>
</dbReference>
<dbReference type="RefSeq" id="XP_054179486.1">
    <property type="nucleotide sequence ID" value="XM_054323511.1"/>
</dbReference>
<dbReference type="RefSeq" id="XP_054179487.1">
    <property type="nucleotide sequence ID" value="XM_054323512.1"/>
</dbReference>
<dbReference type="SMR" id="Q9UPG8"/>
<dbReference type="BioGRID" id="111342">
    <property type="interactions" value="60"/>
</dbReference>
<dbReference type="FunCoup" id="Q9UPG8">
    <property type="interactions" value="2373"/>
</dbReference>
<dbReference type="IntAct" id="Q9UPG8">
    <property type="interactions" value="55"/>
</dbReference>
<dbReference type="STRING" id="9606.ENSP00000246229"/>
<dbReference type="iPTMnet" id="Q9UPG8"/>
<dbReference type="PhosphoSitePlus" id="Q9UPG8"/>
<dbReference type="BioMuta" id="PLAGL2"/>
<dbReference type="DMDM" id="14548188"/>
<dbReference type="jPOST" id="Q9UPG8"/>
<dbReference type="MassIVE" id="Q9UPG8"/>
<dbReference type="PaxDb" id="9606-ENSP00000246229"/>
<dbReference type="PeptideAtlas" id="Q9UPG8"/>
<dbReference type="ProteomicsDB" id="85371"/>
<dbReference type="Antibodypedia" id="1784">
    <property type="antibodies" value="94 antibodies from 25 providers"/>
</dbReference>
<dbReference type="DNASU" id="5326"/>
<dbReference type="Ensembl" id="ENST00000246229.5">
    <property type="protein sequence ID" value="ENSP00000246229.4"/>
    <property type="gene ID" value="ENSG00000126003.7"/>
</dbReference>
<dbReference type="GeneID" id="5326"/>
<dbReference type="KEGG" id="hsa:5326"/>
<dbReference type="MANE-Select" id="ENST00000246229.5">
    <property type="protein sequence ID" value="ENSP00000246229.4"/>
    <property type="RefSeq nucleotide sequence ID" value="NM_002657.3"/>
    <property type="RefSeq protein sequence ID" value="NP_002648.1"/>
</dbReference>
<dbReference type="UCSC" id="uc002wxn.3">
    <property type="organism name" value="human"/>
</dbReference>
<dbReference type="AGR" id="HGNC:9047"/>
<dbReference type="CTD" id="5326"/>
<dbReference type="DisGeNET" id="5326"/>
<dbReference type="GeneCards" id="PLAGL2"/>
<dbReference type="HGNC" id="HGNC:9047">
    <property type="gene designation" value="PLAGL2"/>
</dbReference>
<dbReference type="HPA" id="ENSG00000126003">
    <property type="expression patterns" value="Tissue enhanced (bone)"/>
</dbReference>
<dbReference type="MIM" id="604866">
    <property type="type" value="gene"/>
</dbReference>
<dbReference type="neXtProt" id="NX_Q9UPG8"/>
<dbReference type="OpenTargets" id="ENSG00000126003"/>
<dbReference type="PharmGKB" id="PA33380"/>
<dbReference type="VEuPathDB" id="HostDB:ENSG00000126003"/>
<dbReference type="eggNOG" id="KOG1721">
    <property type="taxonomic scope" value="Eukaryota"/>
</dbReference>
<dbReference type="GeneTree" id="ENSGT00940000160566"/>
<dbReference type="HOGENOM" id="CLU_002678_66_1_1"/>
<dbReference type="InParanoid" id="Q9UPG8"/>
<dbReference type="OMA" id="DMMGGKS"/>
<dbReference type="OrthoDB" id="3533395at2759"/>
<dbReference type="PAN-GO" id="Q9UPG8">
    <property type="GO annotations" value="4 GO annotations based on evolutionary models"/>
</dbReference>
<dbReference type="PhylomeDB" id="Q9UPG8"/>
<dbReference type="TreeFam" id="TF332024"/>
<dbReference type="PathwayCommons" id="Q9UPG8"/>
<dbReference type="SignaLink" id="Q9UPG8"/>
<dbReference type="SIGNOR" id="Q9UPG8"/>
<dbReference type="BioGRID-ORCS" id="5326">
    <property type="hits" value="45 hits in 1186 CRISPR screens"/>
</dbReference>
<dbReference type="ChiTaRS" id="PLAGL2">
    <property type="organism name" value="human"/>
</dbReference>
<dbReference type="GeneWiki" id="PLAGL2"/>
<dbReference type="GenomeRNAi" id="5326"/>
<dbReference type="Pharos" id="Q9UPG8">
    <property type="development level" value="Tbio"/>
</dbReference>
<dbReference type="PRO" id="PR:Q9UPG8"/>
<dbReference type="Proteomes" id="UP000005640">
    <property type="component" value="Chromosome 20"/>
</dbReference>
<dbReference type="RNAct" id="Q9UPG8">
    <property type="molecule type" value="protein"/>
</dbReference>
<dbReference type="Bgee" id="ENSG00000126003">
    <property type="expression patterns" value="Expressed in sperm and 138 other cell types or tissues"/>
</dbReference>
<dbReference type="GO" id="GO:0005634">
    <property type="term" value="C:nucleus"/>
    <property type="evidence" value="ECO:0000318"/>
    <property type="project" value="GO_Central"/>
</dbReference>
<dbReference type="GO" id="GO:0001228">
    <property type="term" value="F:DNA-binding transcription activator activity, RNA polymerase II-specific"/>
    <property type="evidence" value="ECO:0000314"/>
    <property type="project" value="MGI"/>
</dbReference>
<dbReference type="GO" id="GO:0003700">
    <property type="term" value="F:DNA-binding transcription factor activity"/>
    <property type="evidence" value="ECO:0000304"/>
    <property type="project" value="ProtInc"/>
</dbReference>
<dbReference type="GO" id="GO:0000981">
    <property type="term" value="F:DNA-binding transcription factor activity, RNA polymerase II-specific"/>
    <property type="evidence" value="ECO:0000318"/>
    <property type="project" value="GO_Central"/>
</dbReference>
<dbReference type="GO" id="GO:0043565">
    <property type="term" value="F:sequence-specific DNA binding"/>
    <property type="evidence" value="ECO:0000314"/>
    <property type="project" value="MGI"/>
</dbReference>
<dbReference type="GO" id="GO:0008270">
    <property type="term" value="F:zinc ion binding"/>
    <property type="evidence" value="ECO:0007669"/>
    <property type="project" value="UniProtKB-KW"/>
</dbReference>
<dbReference type="GO" id="GO:0034378">
    <property type="term" value="P:chylomicron assembly"/>
    <property type="evidence" value="ECO:0007669"/>
    <property type="project" value="Ensembl"/>
</dbReference>
<dbReference type="GO" id="GO:0006629">
    <property type="term" value="P:lipid metabolic process"/>
    <property type="evidence" value="ECO:0007669"/>
    <property type="project" value="Ensembl"/>
</dbReference>
<dbReference type="GO" id="GO:2001244">
    <property type="term" value="P:positive regulation of intrinsic apoptotic signaling pathway"/>
    <property type="evidence" value="ECO:0007669"/>
    <property type="project" value="Ensembl"/>
</dbReference>
<dbReference type="GO" id="GO:0009791">
    <property type="term" value="P:post-embryonic development"/>
    <property type="evidence" value="ECO:0007669"/>
    <property type="project" value="Ensembl"/>
</dbReference>
<dbReference type="GO" id="GO:0006357">
    <property type="term" value="P:regulation of transcription by RNA polymerase II"/>
    <property type="evidence" value="ECO:0000318"/>
    <property type="project" value="GO_Central"/>
</dbReference>
<dbReference type="FunFam" id="3.30.160.60:FF:000231">
    <property type="entry name" value="PLAG1 like zinc finger 2"/>
    <property type="match status" value="1"/>
</dbReference>
<dbReference type="FunFam" id="3.30.160.60:FF:000256">
    <property type="entry name" value="PLAG1 like zinc finger 2"/>
    <property type="match status" value="1"/>
</dbReference>
<dbReference type="FunFam" id="3.30.160.60:FF:000600">
    <property type="entry name" value="PLAG1 like zinc finger 2"/>
    <property type="match status" value="1"/>
</dbReference>
<dbReference type="FunFam" id="3.30.160.60:FF:000975">
    <property type="entry name" value="PLAG1 like zinc finger 2"/>
    <property type="match status" value="1"/>
</dbReference>
<dbReference type="Gene3D" id="3.30.160.60">
    <property type="entry name" value="Classic Zinc Finger"/>
    <property type="match status" value="5"/>
</dbReference>
<dbReference type="InterPro" id="IPR036236">
    <property type="entry name" value="Znf_C2H2_sf"/>
</dbReference>
<dbReference type="InterPro" id="IPR013087">
    <property type="entry name" value="Znf_C2H2_type"/>
</dbReference>
<dbReference type="PANTHER" id="PTHR24399">
    <property type="entry name" value="ZINC FINGER AND BTB DOMAIN-CONTAINING"/>
    <property type="match status" value="1"/>
</dbReference>
<dbReference type="PANTHER" id="PTHR24399:SF31">
    <property type="entry name" value="ZINC FINGER PROTEIN PLAGL1"/>
    <property type="match status" value="1"/>
</dbReference>
<dbReference type="Pfam" id="PF00096">
    <property type="entry name" value="zf-C2H2"/>
    <property type="match status" value="3"/>
</dbReference>
<dbReference type="Pfam" id="PF13912">
    <property type="entry name" value="zf-C2H2_6"/>
    <property type="match status" value="1"/>
</dbReference>
<dbReference type="SMART" id="SM00355">
    <property type="entry name" value="ZnF_C2H2"/>
    <property type="match status" value="6"/>
</dbReference>
<dbReference type="SUPFAM" id="SSF57667">
    <property type="entry name" value="beta-beta-alpha zinc fingers"/>
    <property type="match status" value="4"/>
</dbReference>
<dbReference type="PROSITE" id="PS00028">
    <property type="entry name" value="ZINC_FINGER_C2H2_1"/>
    <property type="match status" value="6"/>
</dbReference>
<dbReference type="PROSITE" id="PS50157">
    <property type="entry name" value="ZINC_FINGER_C2H2_2"/>
    <property type="match status" value="6"/>
</dbReference>
<keyword id="KW-0010">Activator</keyword>
<keyword id="KW-0238">DNA-binding</keyword>
<keyword id="KW-0479">Metal-binding</keyword>
<keyword id="KW-0539">Nucleus</keyword>
<keyword id="KW-1267">Proteomics identification</keyword>
<keyword id="KW-1185">Reference proteome</keyword>
<keyword id="KW-0677">Repeat</keyword>
<keyword id="KW-0804">Transcription</keyword>
<keyword id="KW-0805">Transcription regulation</keyword>
<keyword id="KW-0862">Zinc</keyword>
<keyword id="KW-0863">Zinc-finger</keyword>
<comment type="function">
    <text>Shows weak transcriptional activatory activity.</text>
</comment>
<comment type="interaction">
    <interactant intactId="EBI-2876622">
        <id>Q9UPG8</id>
    </interactant>
    <interactant intactId="EBI-17183751">
        <id>X5D778</id>
        <label>ANKRD11</label>
    </interactant>
    <organismsDiffer>false</organismsDiffer>
    <experiments>3</experiments>
</comment>
<comment type="interaction">
    <interactant intactId="EBI-2876622">
        <id>Q9UPG8</id>
    </interactant>
    <interactant intactId="EBI-948603">
        <id>Q03989</id>
        <label>ARID5A</label>
    </interactant>
    <organismsDiffer>false</organismsDiffer>
    <experiments>3</experiments>
</comment>
<comment type="interaction">
    <interactant intactId="EBI-2876622">
        <id>Q9UPG8</id>
    </interactant>
    <interactant intactId="EBI-1050106">
        <id>O75934</id>
        <label>BCAS2</label>
    </interactant>
    <organismsDiffer>false</organismsDiffer>
    <experiments>3</experiments>
</comment>
<comment type="interaction">
    <interactant intactId="EBI-2876622">
        <id>Q9UPG8</id>
    </interactant>
    <interactant intactId="EBI-744545">
        <id>Q8NEC5</id>
        <label>CATSPER1</label>
    </interactant>
    <organismsDiffer>false</organismsDiffer>
    <experiments>3</experiments>
</comment>
<comment type="interaction">
    <interactant intactId="EBI-2876622">
        <id>Q9UPG8</id>
    </interactant>
    <interactant intactId="EBI-744556">
        <id>Q96HB5</id>
        <label>CCDC120</label>
    </interactant>
    <organismsDiffer>false</organismsDiffer>
    <experiments>3</experiments>
</comment>
<comment type="interaction">
    <interactant intactId="EBI-2876622">
        <id>Q9UPG8</id>
    </interactant>
    <interactant intactId="EBI-11962928">
        <id>Q9UI47-2</id>
        <label>CTNNA3</label>
    </interactant>
    <organismsDiffer>false</organismsDiffer>
    <experiments>3</experiments>
</comment>
<comment type="interaction">
    <interactant intactId="EBI-2876622">
        <id>Q9UPG8</id>
    </interactant>
    <interactant intactId="EBI-1051531">
        <id>Q6P158</id>
        <label>DHX57</label>
    </interactant>
    <organismsDiffer>false</organismsDiffer>
    <experiments>3</experiments>
</comment>
<comment type="interaction">
    <interactant intactId="EBI-2876622">
        <id>Q9UPG8</id>
    </interactant>
    <interactant intactId="EBI-739789">
        <id>Q92997</id>
        <label>DVL3</label>
    </interactant>
    <organismsDiffer>false</organismsDiffer>
    <experiments>3</experiments>
</comment>
<comment type="interaction">
    <interactant intactId="EBI-2876622">
        <id>Q9UPG8</id>
    </interactant>
    <interactant intactId="EBI-7225287">
        <id>Q96MY7</id>
        <label>FAM161B</label>
    </interactant>
    <organismsDiffer>false</organismsDiffer>
    <experiments>3</experiments>
</comment>
<comment type="interaction">
    <interactant intactId="EBI-2876622">
        <id>Q9UPG8</id>
    </interactant>
    <interactant intactId="EBI-1384254">
        <id>Q86UY5</id>
        <label>FAM83A</label>
    </interactant>
    <organismsDiffer>false</organismsDiffer>
    <experiments>5</experiments>
</comment>
<comment type="interaction">
    <interactant intactId="EBI-2876622">
        <id>Q9UPG8</id>
    </interactant>
    <interactant intactId="EBI-6658203">
        <id>Q86YD7</id>
        <label>FAM90A1</label>
    </interactant>
    <organismsDiffer>false</organismsDiffer>
    <experiments>3</experiments>
</comment>
<comment type="interaction">
    <interactant intactId="EBI-2876622">
        <id>Q9UPG8</id>
    </interactant>
    <interactant intactId="EBI-744104">
        <id>P55040</id>
        <label>GEM</label>
    </interactant>
    <organismsDiffer>false</organismsDiffer>
    <experiments>3</experiments>
</comment>
<comment type="interaction">
    <interactant intactId="EBI-2876622">
        <id>Q9UPG8</id>
    </interactant>
    <interactant intactId="EBI-748515">
        <id>Q8IVS8</id>
        <label>GLYCTK</label>
    </interactant>
    <organismsDiffer>false</organismsDiffer>
    <experiments>3</experiments>
</comment>
<comment type="interaction">
    <interactant intactId="EBI-2876622">
        <id>Q9UPG8</id>
    </interactant>
    <interactant intactId="EBI-11959863">
        <id>Q9NWQ4-1</id>
        <label>GPATCH2L</label>
    </interactant>
    <organismsDiffer>false</organismsDiffer>
    <experiments>3</experiments>
</comment>
<comment type="interaction">
    <interactant intactId="EBI-2876622">
        <id>Q9UPG8</id>
    </interactant>
    <interactant intactId="EBI-740553">
        <id>P13807</id>
        <label>GYS1</label>
    </interactant>
    <organismsDiffer>false</organismsDiffer>
    <experiments>3</experiments>
</comment>
<comment type="interaction">
    <interactant intactId="EBI-2876622">
        <id>Q9UPG8</id>
    </interactant>
    <interactant intactId="EBI-715611">
        <id>Q9C086</id>
        <label>INO80B</label>
    </interactant>
    <organismsDiffer>false</organismsDiffer>
    <experiments>3</experiments>
</comment>
<comment type="interaction">
    <interactant intactId="EBI-2876622">
        <id>Q9UPG8</id>
    </interactant>
    <interactant intactId="EBI-12166369">
        <id>Q9BZI1</id>
        <label>IRX2</label>
    </interactant>
    <organismsDiffer>false</organismsDiffer>
    <experiments>3</experiments>
</comment>
<comment type="interaction">
    <interactant intactId="EBI-2876622">
        <id>Q9UPG8</id>
    </interactant>
    <interactant intactId="EBI-2556193">
        <id>Q63ZY3</id>
        <label>KANK2</label>
    </interactant>
    <organismsDiffer>false</organismsDiffer>
    <experiments>3</experiments>
</comment>
<comment type="interaction">
    <interactant intactId="EBI-2876622">
        <id>Q9UPG8</id>
    </interactant>
    <interactant intactId="EBI-77889">
        <id>Q9UI95</id>
        <label>MAD2L2</label>
    </interactant>
    <organismsDiffer>false</organismsDiffer>
    <experiments>3</experiments>
</comment>
<comment type="interaction">
    <interactant intactId="EBI-2876622">
        <id>Q9UPG8</id>
    </interactant>
    <interactant intactId="EBI-959949">
        <id>P28482</id>
        <label>MAPK1</label>
    </interactant>
    <organismsDiffer>false</organismsDiffer>
    <experiments>3</experiments>
</comment>
<comment type="interaction">
    <interactant intactId="EBI-2876622">
        <id>Q9UPG8</id>
    </interactant>
    <interactant intactId="EBI-10269566">
        <id>Q8NDC4</id>
        <label>MORN4</label>
    </interactant>
    <organismsDiffer>false</organismsDiffer>
    <experiments>3</experiments>
</comment>
<comment type="interaction">
    <interactant intactId="EBI-2876622">
        <id>Q9UPG8</id>
    </interactant>
    <interactant intactId="EBI-536879">
        <id>O43482</id>
        <label>OIP5</label>
    </interactant>
    <organismsDiffer>false</organismsDiffer>
    <experiments>3</experiments>
</comment>
<comment type="interaction">
    <interactant intactId="EBI-2876622">
        <id>Q9UPG8</id>
    </interactant>
    <interactant intactId="EBI-10225049">
        <id>Q7RTU3</id>
        <label>OLIG3</label>
    </interactant>
    <organismsDiffer>false</organismsDiffer>
    <experiments>3</experiments>
</comment>
<comment type="interaction">
    <interactant intactId="EBI-2876622">
        <id>Q9UPG8</id>
    </interactant>
    <interactant intactId="EBI-12111000">
        <id>P55771</id>
        <label>PAX9</label>
    </interactant>
    <organismsDiffer>false</organismsDiffer>
    <experiments>5</experiments>
</comment>
<comment type="interaction">
    <interactant intactId="EBI-2876622">
        <id>Q9UPG8</id>
    </interactant>
    <interactant intactId="EBI-14568740">
        <id>B7ZLY0</id>
        <label>PHC2</label>
    </interactant>
    <organismsDiffer>false</organismsDiffer>
    <experiments>3</experiments>
</comment>
<comment type="interaction">
    <interactant intactId="EBI-2876622">
        <id>Q9UPG8</id>
    </interactant>
    <interactant intactId="EBI-714158">
        <id>Q13526</id>
        <label>PIN1</label>
    </interactant>
    <organismsDiffer>false</organismsDiffer>
    <experiments>3</experiments>
</comment>
<comment type="interaction">
    <interactant intactId="EBI-2876622">
        <id>Q9UPG8</id>
    </interactant>
    <interactant intactId="EBI-11986293">
        <id>P0CG20</id>
        <label>PRR35</label>
    </interactant>
    <organismsDiffer>false</organismsDiffer>
    <experiments>3</experiments>
</comment>
<comment type="interaction">
    <interactant intactId="EBI-2876622">
        <id>Q9UPG8</id>
    </interactant>
    <interactant intactId="EBI-2367123">
        <id>O94955</id>
        <label>RHOBTB3</label>
    </interactant>
    <organismsDiffer>false</organismsDiffer>
    <experiments>3</experiments>
</comment>
<comment type="interaction">
    <interactant intactId="EBI-2876622">
        <id>Q9UPG8</id>
    </interactant>
    <interactant intactId="EBI-10226430">
        <id>Q0D2K3</id>
        <label>RIPPLY1</label>
    </interactant>
    <organismsDiffer>false</organismsDiffer>
    <experiments>5</experiments>
</comment>
<comment type="interaction">
    <interactant intactId="EBI-2876622">
        <id>Q9UPG8</id>
    </interactant>
    <interactant intactId="EBI-14067109">
        <id>Q96NU1</id>
        <label>SAMD11</label>
    </interactant>
    <organismsDiffer>false</organismsDiffer>
    <experiments>3</experiments>
</comment>
<comment type="interaction">
    <interactant intactId="EBI-2876622">
        <id>Q9UPG8</id>
    </interactant>
    <interactant intactId="EBI-714091">
        <id>P49903</id>
        <label>SEPHS1</label>
    </interactant>
    <organismsDiffer>false</organismsDiffer>
    <experiments>3</experiments>
</comment>
<comment type="interaction">
    <interactant intactId="EBI-2876622">
        <id>Q9UPG8</id>
    </interactant>
    <interactant intactId="EBI-358489">
        <id>Q96GM5</id>
        <label>SMARCD1</label>
    </interactant>
    <organismsDiffer>false</organismsDiffer>
    <experiments>3</experiments>
</comment>
<comment type="interaction">
    <interactant intactId="EBI-2876622">
        <id>Q9UPG8</id>
    </interactant>
    <interactant intactId="EBI-8644516">
        <id>Q9BXF9</id>
        <label>TEKT3</label>
    </interactant>
    <organismsDiffer>false</organismsDiffer>
    <experiments>3</experiments>
</comment>
<comment type="interaction">
    <interactant intactId="EBI-2876622">
        <id>Q9UPG8</id>
    </interactant>
    <interactant intactId="EBI-750487">
        <id>Q8WW24</id>
        <label>TEKT4</label>
    </interactant>
    <organismsDiffer>false</organismsDiffer>
    <experiments>3</experiments>
</comment>
<comment type="interaction">
    <interactant intactId="EBI-2876622">
        <id>Q9UPG8</id>
    </interactant>
    <interactant intactId="EBI-3650647">
        <id>Q9BUZ4</id>
        <label>TRAF4</label>
    </interactant>
    <organismsDiffer>false</organismsDiffer>
    <experiments>3</experiments>
</comment>
<comment type="interaction">
    <interactant intactId="EBI-2876622">
        <id>Q9UPG8</id>
    </interactant>
    <interactant intactId="EBI-725997">
        <id>Q8WV44</id>
        <label>TRIM41</label>
    </interactant>
    <organismsDiffer>false</organismsDiffer>
    <experiments>3</experiments>
</comment>
<comment type="interaction">
    <interactant intactId="EBI-2876622">
        <id>Q9UPG8</id>
    </interactant>
    <interactant intactId="EBI-11980193">
        <id>Q14119</id>
        <label>VEZF1</label>
    </interactant>
    <organismsDiffer>false</organismsDiffer>
    <experiments>3</experiments>
</comment>
<comment type="interaction">
    <interactant intactId="EBI-2876622">
        <id>Q9UPG8</id>
    </interactant>
    <interactant intactId="EBI-11721624">
        <id>P62699</id>
        <label>YPEL5</label>
    </interactant>
    <organismsDiffer>false</organismsDiffer>
    <experiments>3</experiments>
</comment>
<comment type="interaction">
    <interactant intactId="EBI-2876622">
        <id>Q9UPG8</id>
    </interactant>
    <interactant intactId="EBI-10273713">
        <id>Q8TBZ8</id>
        <label>ZNF564</label>
    </interactant>
    <organismsDiffer>false</organismsDiffer>
    <experiments>3</experiments>
</comment>
<comment type="interaction">
    <interactant intactId="EBI-2876622">
        <id>Q9UPG8</id>
    </interactant>
    <interactant intactId="EBI-745520">
        <id>Q9P0T4</id>
        <label>ZNF581</label>
    </interactant>
    <organismsDiffer>false</organismsDiffer>
    <experiments>3</experiments>
</comment>
<comment type="interaction">
    <interactant intactId="EBI-2876622">
        <id>Q9UPG8</id>
    </interactant>
    <interactant intactId="EBI-750454">
        <id>Q96EJ4</id>
    </interactant>
    <organismsDiffer>false</organismsDiffer>
    <experiments>3</experiments>
</comment>
<comment type="subcellular location">
    <subcellularLocation>
        <location evidence="2">Nucleus</location>
    </subcellularLocation>
</comment>
<comment type="similarity">
    <text evidence="2">Belongs to the krueppel C2H2-type zinc-finger protein family.</text>
</comment>
<comment type="sequence caution" evidence="2">
    <conflict type="erroneous initiation">
        <sequence resource="EMBL-CDS" id="BAA12113"/>
    </conflict>
</comment>
<comment type="online information" name="Atlas of Genetics and Cytogenetics in Oncology and Haematology">
    <link uri="https://atlasgeneticsoncology.org/gene/41738/PLAGL2"/>
</comment>
<reference key="1">
    <citation type="journal article" date="1998" name="J. Biol. Chem.">
        <title>Transcriptional activation capacity of the novel PLAG family of zinc finger proteins.</title>
        <authorList>
            <person name="Kas K."/>
            <person name="Voz M.L."/>
            <person name="Hensen K."/>
            <person name="Meyen E."/>
            <person name="Van de Ven W.J.M."/>
        </authorList>
    </citation>
    <scope>NUCLEOTIDE SEQUENCE [MRNA]</scope>
    <source>
        <tissue>Fetal kidney</tissue>
    </source>
</reference>
<reference key="2">
    <citation type="journal article" date="1996" name="DNA Res.">
        <title>Prediction of the coding sequences of unidentified human genes. V. The coding sequences of 40 new genes (KIAA0161-KIAA0200) deduced by analysis of cDNA clones from human cell line KG-1.</title>
        <authorList>
            <person name="Nagase T."/>
            <person name="Seki N."/>
            <person name="Ishikawa K."/>
            <person name="Tanaka A."/>
            <person name="Nomura N."/>
        </authorList>
    </citation>
    <scope>NUCLEOTIDE SEQUENCE [LARGE SCALE MRNA]</scope>
    <source>
        <tissue>Bone marrow</tissue>
    </source>
</reference>
<reference key="3">
    <citation type="journal article" date="2004" name="Nat. Genet.">
        <title>Complete sequencing and characterization of 21,243 full-length human cDNAs.</title>
        <authorList>
            <person name="Ota T."/>
            <person name="Suzuki Y."/>
            <person name="Nishikawa T."/>
            <person name="Otsuki T."/>
            <person name="Sugiyama T."/>
            <person name="Irie R."/>
            <person name="Wakamatsu A."/>
            <person name="Hayashi K."/>
            <person name="Sato H."/>
            <person name="Nagai K."/>
            <person name="Kimura K."/>
            <person name="Makita H."/>
            <person name="Sekine M."/>
            <person name="Obayashi M."/>
            <person name="Nishi T."/>
            <person name="Shibahara T."/>
            <person name="Tanaka T."/>
            <person name="Ishii S."/>
            <person name="Yamamoto J."/>
            <person name="Saito K."/>
            <person name="Kawai Y."/>
            <person name="Isono Y."/>
            <person name="Nakamura Y."/>
            <person name="Nagahari K."/>
            <person name="Murakami K."/>
            <person name="Yasuda T."/>
            <person name="Iwayanagi T."/>
            <person name="Wagatsuma M."/>
            <person name="Shiratori A."/>
            <person name="Sudo H."/>
            <person name="Hosoiri T."/>
            <person name="Kaku Y."/>
            <person name="Kodaira H."/>
            <person name="Kondo H."/>
            <person name="Sugawara M."/>
            <person name="Takahashi M."/>
            <person name="Kanda K."/>
            <person name="Yokoi T."/>
            <person name="Furuya T."/>
            <person name="Kikkawa E."/>
            <person name="Omura Y."/>
            <person name="Abe K."/>
            <person name="Kamihara K."/>
            <person name="Katsuta N."/>
            <person name="Sato K."/>
            <person name="Tanikawa M."/>
            <person name="Yamazaki M."/>
            <person name="Ninomiya K."/>
            <person name="Ishibashi T."/>
            <person name="Yamashita H."/>
            <person name="Murakawa K."/>
            <person name="Fujimori K."/>
            <person name="Tanai H."/>
            <person name="Kimata M."/>
            <person name="Watanabe M."/>
            <person name="Hiraoka S."/>
            <person name="Chiba Y."/>
            <person name="Ishida S."/>
            <person name="Ono Y."/>
            <person name="Takiguchi S."/>
            <person name="Watanabe S."/>
            <person name="Yosida M."/>
            <person name="Hotuta T."/>
            <person name="Kusano J."/>
            <person name="Kanehori K."/>
            <person name="Takahashi-Fujii A."/>
            <person name="Hara H."/>
            <person name="Tanase T.-O."/>
            <person name="Nomura Y."/>
            <person name="Togiya S."/>
            <person name="Komai F."/>
            <person name="Hara R."/>
            <person name="Takeuchi K."/>
            <person name="Arita M."/>
            <person name="Imose N."/>
            <person name="Musashino K."/>
            <person name="Yuuki H."/>
            <person name="Oshima A."/>
            <person name="Sasaki N."/>
            <person name="Aotsuka S."/>
            <person name="Yoshikawa Y."/>
            <person name="Matsunawa H."/>
            <person name="Ichihara T."/>
            <person name="Shiohata N."/>
            <person name="Sano S."/>
            <person name="Moriya S."/>
            <person name="Momiyama H."/>
            <person name="Satoh N."/>
            <person name="Takami S."/>
            <person name="Terashima Y."/>
            <person name="Suzuki O."/>
            <person name="Nakagawa S."/>
            <person name="Senoh A."/>
            <person name="Mizoguchi H."/>
            <person name="Goto Y."/>
            <person name="Shimizu F."/>
            <person name="Wakebe H."/>
            <person name="Hishigaki H."/>
            <person name="Watanabe T."/>
            <person name="Sugiyama A."/>
            <person name="Takemoto M."/>
            <person name="Kawakami B."/>
            <person name="Yamazaki M."/>
            <person name="Watanabe K."/>
            <person name="Kumagai A."/>
            <person name="Itakura S."/>
            <person name="Fukuzumi Y."/>
            <person name="Fujimori Y."/>
            <person name="Komiyama M."/>
            <person name="Tashiro H."/>
            <person name="Tanigami A."/>
            <person name="Fujiwara T."/>
            <person name="Ono T."/>
            <person name="Yamada K."/>
            <person name="Fujii Y."/>
            <person name="Ozaki K."/>
            <person name="Hirao M."/>
            <person name="Ohmori Y."/>
            <person name="Kawabata A."/>
            <person name="Hikiji T."/>
            <person name="Kobatake N."/>
            <person name="Inagaki H."/>
            <person name="Ikema Y."/>
            <person name="Okamoto S."/>
            <person name="Okitani R."/>
            <person name="Kawakami T."/>
            <person name="Noguchi S."/>
            <person name="Itoh T."/>
            <person name="Shigeta K."/>
            <person name="Senba T."/>
            <person name="Matsumura K."/>
            <person name="Nakajima Y."/>
            <person name="Mizuno T."/>
            <person name="Morinaga M."/>
            <person name="Sasaki M."/>
            <person name="Togashi T."/>
            <person name="Oyama M."/>
            <person name="Hata H."/>
            <person name="Watanabe M."/>
            <person name="Komatsu T."/>
            <person name="Mizushima-Sugano J."/>
            <person name="Satoh T."/>
            <person name="Shirai Y."/>
            <person name="Takahashi Y."/>
            <person name="Nakagawa K."/>
            <person name="Okumura K."/>
            <person name="Nagase T."/>
            <person name="Nomura N."/>
            <person name="Kikuchi H."/>
            <person name="Masuho Y."/>
            <person name="Yamashita R."/>
            <person name="Nakai K."/>
            <person name="Yada T."/>
            <person name="Nakamura Y."/>
            <person name="Ohara O."/>
            <person name="Isogai T."/>
            <person name="Sugano S."/>
        </authorList>
    </citation>
    <scope>NUCLEOTIDE SEQUENCE [LARGE SCALE MRNA]</scope>
    <source>
        <tissue>Testis</tissue>
    </source>
</reference>
<reference key="4">
    <citation type="journal article" date="2001" name="Nature">
        <title>The DNA sequence and comparative analysis of human chromosome 20.</title>
        <authorList>
            <person name="Deloukas P."/>
            <person name="Matthews L.H."/>
            <person name="Ashurst J.L."/>
            <person name="Burton J."/>
            <person name="Gilbert J.G.R."/>
            <person name="Jones M."/>
            <person name="Stavrides G."/>
            <person name="Almeida J.P."/>
            <person name="Babbage A.K."/>
            <person name="Bagguley C.L."/>
            <person name="Bailey J."/>
            <person name="Barlow K.F."/>
            <person name="Bates K.N."/>
            <person name="Beard L.M."/>
            <person name="Beare D.M."/>
            <person name="Beasley O.P."/>
            <person name="Bird C.P."/>
            <person name="Blakey S.E."/>
            <person name="Bridgeman A.M."/>
            <person name="Brown A.J."/>
            <person name="Buck D."/>
            <person name="Burrill W.D."/>
            <person name="Butler A.P."/>
            <person name="Carder C."/>
            <person name="Carter N.P."/>
            <person name="Chapman J.C."/>
            <person name="Clamp M."/>
            <person name="Clark G."/>
            <person name="Clark L.N."/>
            <person name="Clark S.Y."/>
            <person name="Clee C.M."/>
            <person name="Clegg S."/>
            <person name="Cobley V.E."/>
            <person name="Collier R.E."/>
            <person name="Connor R.E."/>
            <person name="Corby N.R."/>
            <person name="Coulson A."/>
            <person name="Coville G.J."/>
            <person name="Deadman R."/>
            <person name="Dhami P.D."/>
            <person name="Dunn M."/>
            <person name="Ellington A.G."/>
            <person name="Frankland J.A."/>
            <person name="Fraser A."/>
            <person name="French L."/>
            <person name="Garner P."/>
            <person name="Grafham D.V."/>
            <person name="Griffiths C."/>
            <person name="Griffiths M.N.D."/>
            <person name="Gwilliam R."/>
            <person name="Hall R.E."/>
            <person name="Hammond S."/>
            <person name="Harley J.L."/>
            <person name="Heath P.D."/>
            <person name="Ho S."/>
            <person name="Holden J.L."/>
            <person name="Howden P.J."/>
            <person name="Huckle E."/>
            <person name="Hunt A.R."/>
            <person name="Hunt S.E."/>
            <person name="Jekosch K."/>
            <person name="Johnson C.M."/>
            <person name="Johnson D."/>
            <person name="Kay M.P."/>
            <person name="Kimberley A.M."/>
            <person name="King A."/>
            <person name="Knights A."/>
            <person name="Laird G.K."/>
            <person name="Lawlor S."/>
            <person name="Lehvaeslaiho M.H."/>
            <person name="Leversha M.A."/>
            <person name="Lloyd C."/>
            <person name="Lloyd D.M."/>
            <person name="Lovell J.D."/>
            <person name="Marsh V.L."/>
            <person name="Martin S.L."/>
            <person name="McConnachie L.J."/>
            <person name="McLay K."/>
            <person name="McMurray A.A."/>
            <person name="Milne S.A."/>
            <person name="Mistry D."/>
            <person name="Moore M.J.F."/>
            <person name="Mullikin J.C."/>
            <person name="Nickerson T."/>
            <person name="Oliver K."/>
            <person name="Parker A."/>
            <person name="Patel R."/>
            <person name="Pearce T.A.V."/>
            <person name="Peck A.I."/>
            <person name="Phillimore B.J.C.T."/>
            <person name="Prathalingam S.R."/>
            <person name="Plumb R.W."/>
            <person name="Ramsay H."/>
            <person name="Rice C.M."/>
            <person name="Ross M.T."/>
            <person name="Scott C.E."/>
            <person name="Sehra H.K."/>
            <person name="Shownkeen R."/>
            <person name="Sims S."/>
            <person name="Skuce C.D."/>
            <person name="Smith M.L."/>
            <person name="Soderlund C."/>
            <person name="Steward C.A."/>
            <person name="Sulston J.E."/>
            <person name="Swann R.M."/>
            <person name="Sycamore N."/>
            <person name="Taylor R."/>
            <person name="Tee L."/>
            <person name="Thomas D.W."/>
            <person name="Thorpe A."/>
            <person name="Tracey A."/>
            <person name="Tromans A.C."/>
            <person name="Vaudin M."/>
            <person name="Wall M."/>
            <person name="Wallis J.M."/>
            <person name="Whitehead S.L."/>
            <person name="Whittaker P."/>
            <person name="Willey D.L."/>
            <person name="Williams L."/>
            <person name="Williams S.A."/>
            <person name="Wilming L."/>
            <person name="Wray P.W."/>
            <person name="Hubbard T."/>
            <person name="Durbin R.M."/>
            <person name="Bentley D.R."/>
            <person name="Beck S."/>
            <person name="Rogers J."/>
        </authorList>
    </citation>
    <scope>NUCLEOTIDE SEQUENCE [LARGE SCALE GENOMIC DNA]</scope>
</reference>
<reference key="5">
    <citation type="submission" date="2005-09" db="EMBL/GenBank/DDBJ databases">
        <authorList>
            <person name="Mural R.J."/>
            <person name="Istrail S."/>
            <person name="Sutton G.G."/>
            <person name="Florea L."/>
            <person name="Halpern A.L."/>
            <person name="Mobarry C.M."/>
            <person name="Lippert R."/>
            <person name="Walenz B."/>
            <person name="Shatkay H."/>
            <person name="Dew I."/>
            <person name="Miller J.R."/>
            <person name="Flanigan M.J."/>
            <person name="Edwards N.J."/>
            <person name="Bolanos R."/>
            <person name="Fasulo D."/>
            <person name="Halldorsson B.V."/>
            <person name="Hannenhalli S."/>
            <person name="Turner R."/>
            <person name="Yooseph S."/>
            <person name="Lu F."/>
            <person name="Nusskern D.R."/>
            <person name="Shue B.C."/>
            <person name="Zheng X.H."/>
            <person name="Zhong F."/>
            <person name="Delcher A.L."/>
            <person name="Huson D.H."/>
            <person name="Kravitz S.A."/>
            <person name="Mouchard L."/>
            <person name="Reinert K."/>
            <person name="Remington K.A."/>
            <person name="Clark A.G."/>
            <person name="Waterman M.S."/>
            <person name="Eichler E.E."/>
            <person name="Adams M.D."/>
            <person name="Hunkapiller M.W."/>
            <person name="Myers E.W."/>
            <person name="Venter J.C."/>
        </authorList>
    </citation>
    <scope>NUCLEOTIDE SEQUENCE [LARGE SCALE GENOMIC DNA]</scope>
</reference>
<reference key="6">
    <citation type="journal article" date="2004" name="Genome Res.">
        <title>The status, quality, and expansion of the NIH full-length cDNA project: the Mammalian Gene Collection (MGC).</title>
        <authorList>
            <consortium name="The MGC Project Team"/>
        </authorList>
    </citation>
    <scope>NUCLEOTIDE SEQUENCE [LARGE SCALE MRNA]</scope>
    <source>
        <tissue>B-cell</tissue>
    </source>
</reference>
<proteinExistence type="evidence at protein level"/>
<protein>
    <recommendedName>
        <fullName>Zinc finger protein PLAGL2</fullName>
    </recommendedName>
    <alternativeName>
        <fullName>Pleiomorphic adenoma-like protein 2</fullName>
    </alternativeName>
</protein>
<evidence type="ECO:0000255" key="1">
    <source>
        <dbReference type="PROSITE-ProRule" id="PRU00042"/>
    </source>
</evidence>
<evidence type="ECO:0000305" key="2"/>
<feature type="chain" id="PRO_0000047223" description="Zinc finger protein PLAGL2">
    <location>
        <begin position="1"/>
        <end position="496"/>
    </location>
</feature>
<feature type="zinc finger region" description="C2H2-type 1" evidence="1">
    <location>
        <begin position="68"/>
        <end position="92"/>
    </location>
</feature>
<feature type="zinc finger region" description="C2H2-type 2" evidence="1">
    <location>
        <begin position="98"/>
        <end position="120"/>
    </location>
</feature>
<feature type="zinc finger region" description="C2H2-type 3" evidence="1">
    <location>
        <begin position="127"/>
        <end position="149"/>
    </location>
</feature>
<feature type="zinc finger region" description="C2H2-type 4" evidence="1">
    <location>
        <begin position="156"/>
        <end position="178"/>
    </location>
</feature>
<feature type="zinc finger region" description="C2H2-type 5" evidence="1">
    <location>
        <begin position="191"/>
        <end position="213"/>
    </location>
</feature>
<feature type="zinc finger region" description="C2H2-type 6" evidence="1">
    <location>
        <begin position="219"/>
        <end position="242"/>
    </location>
</feature>
<gene>
    <name type="primary">PLAGL2</name>
    <name type="synonym">KIAA0198</name>
</gene>
<accession>Q9UPG8</accession>
<accession>A8K8T5</accession>
<accession>E1P5M3</accession>
<accession>Q92584</accession>
<name>PLAL2_HUMAN</name>